<proteinExistence type="inferred from homology"/>
<reference key="1">
    <citation type="journal article" date="2007" name="Nat. Biotechnol.">
        <title>Comparative analysis of the complete genome sequence of the plant growth-promoting bacterium Bacillus amyloliquefaciens FZB42.</title>
        <authorList>
            <person name="Chen X.H."/>
            <person name="Koumoutsi A."/>
            <person name="Scholz R."/>
            <person name="Eisenreich A."/>
            <person name="Schneider K."/>
            <person name="Heinemeyer I."/>
            <person name="Morgenstern B."/>
            <person name="Voss B."/>
            <person name="Hess W.R."/>
            <person name="Reva O."/>
            <person name="Junge H."/>
            <person name="Voigt B."/>
            <person name="Jungblut P.R."/>
            <person name="Vater J."/>
            <person name="Suessmuth R."/>
            <person name="Liesegang H."/>
            <person name="Strittmatter A."/>
            <person name="Gottschalk G."/>
            <person name="Borriss R."/>
        </authorList>
    </citation>
    <scope>NUCLEOTIDE SEQUENCE [LARGE SCALE GENOMIC DNA]</scope>
    <source>
        <strain>DSM 23117 / BGSC 10A6 / LMG 26770 / FZB42</strain>
    </source>
</reference>
<keyword id="KW-0413">Isomerase</keyword>
<protein>
    <recommendedName>
        <fullName evidence="1">Uronate isomerase</fullName>
        <ecNumber evidence="1">5.3.1.12</ecNumber>
    </recommendedName>
    <alternativeName>
        <fullName evidence="1">Glucuronate isomerase</fullName>
    </alternativeName>
    <alternativeName>
        <fullName evidence="1">Uronic isomerase</fullName>
    </alternativeName>
</protein>
<dbReference type="EC" id="5.3.1.12" evidence="1"/>
<dbReference type="EMBL" id="CP000560">
    <property type="protein sequence ID" value="ABS73601.1"/>
    <property type="molecule type" value="Genomic_DNA"/>
</dbReference>
<dbReference type="SMR" id="A7Z3M5"/>
<dbReference type="KEGG" id="bay:RBAM_012380"/>
<dbReference type="HOGENOM" id="CLU_044465_1_0_9"/>
<dbReference type="UniPathway" id="UPA00246"/>
<dbReference type="Proteomes" id="UP000001120">
    <property type="component" value="Chromosome"/>
</dbReference>
<dbReference type="GO" id="GO:0008880">
    <property type="term" value="F:glucuronate isomerase activity"/>
    <property type="evidence" value="ECO:0007669"/>
    <property type="project" value="UniProtKB-UniRule"/>
</dbReference>
<dbReference type="GO" id="GO:0019698">
    <property type="term" value="P:D-galacturonate catabolic process"/>
    <property type="evidence" value="ECO:0007669"/>
    <property type="project" value="TreeGrafter"/>
</dbReference>
<dbReference type="GO" id="GO:0042840">
    <property type="term" value="P:D-glucuronate catabolic process"/>
    <property type="evidence" value="ECO:0007669"/>
    <property type="project" value="TreeGrafter"/>
</dbReference>
<dbReference type="Gene3D" id="3.20.20.140">
    <property type="entry name" value="Metal-dependent hydrolases"/>
    <property type="match status" value="1"/>
</dbReference>
<dbReference type="Gene3D" id="1.10.2020.10">
    <property type="entry name" value="uronate isomerase, domain 2, chain A"/>
    <property type="match status" value="1"/>
</dbReference>
<dbReference type="HAMAP" id="MF_00675">
    <property type="entry name" value="UxaC"/>
    <property type="match status" value="1"/>
</dbReference>
<dbReference type="InterPro" id="IPR032466">
    <property type="entry name" value="Metal_Hydrolase"/>
</dbReference>
<dbReference type="InterPro" id="IPR003766">
    <property type="entry name" value="Uronate_isomerase"/>
</dbReference>
<dbReference type="NCBIfam" id="NF002794">
    <property type="entry name" value="PRK02925.1"/>
    <property type="match status" value="1"/>
</dbReference>
<dbReference type="PANTHER" id="PTHR30068">
    <property type="entry name" value="URONATE ISOMERASE"/>
    <property type="match status" value="1"/>
</dbReference>
<dbReference type="PANTHER" id="PTHR30068:SF4">
    <property type="entry name" value="URONATE ISOMERASE"/>
    <property type="match status" value="1"/>
</dbReference>
<dbReference type="Pfam" id="PF02614">
    <property type="entry name" value="UxaC"/>
    <property type="match status" value="1"/>
</dbReference>
<dbReference type="SUPFAM" id="SSF51556">
    <property type="entry name" value="Metallo-dependent hydrolases"/>
    <property type="match status" value="1"/>
</dbReference>
<feature type="chain" id="PRO_1000044760" description="Uronate isomerase">
    <location>
        <begin position="1"/>
        <end position="465"/>
    </location>
</feature>
<accession>A7Z3M5</accession>
<evidence type="ECO:0000255" key="1">
    <source>
        <dbReference type="HAMAP-Rule" id="MF_00675"/>
    </source>
</evidence>
<gene>
    <name evidence="1" type="primary">uxaC</name>
    <name type="ordered locus">RBAM_012380</name>
</gene>
<comment type="catalytic activity">
    <reaction evidence="1">
        <text>D-glucuronate = D-fructuronate</text>
        <dbReference type="Rhea" id="RHEA:13049"/>
        <dbReference type="ChEBI" id="CHEBI:58720"/>
        <dbReference type="ChEBI" id="CHEBI:59863"/>
        <dbReference type="EC" id="5.3.1.12"/>
    </reaction>
</comment>
<comment type="catalytic activity">
    <reaction evidence="1">
        <text>aldehydo-D-galacturonate = keto-D-tagaturonate</text>
        <dbReference type="Rhea" id="RHEA:27702"/>
        <dbReference type="ChEBI" id="CHEBI:12952"/>
        <dbReference type="ChEBI" id="CHEBI:17886"/>
        <dbReference type="EC" id="5.3.1.12"/>
    </reaction>
</comment>
<comment type="pathway">
    <text evidence="1">Carbohydrate metabolism; pentose and glucuronate interconversion.</text>
</comment>
<comment type="similarity">
    <text evidence="1">Belongs to the metallo-dependent hydrolases superfamily. Uronate isomerase family.</text>
</comment>
<organism>
    <name type="scientific">Bacillus velezensis (strain DSM 23117 / BGSC 10A6 / LMG 26770 / FZB42)</name>
    <name type="common">Bacillus amyloliquefaciens subsp. plantarum</name>
    <dbReference type="NCBI Taxonomy" id="326423"/>
    <lineage>
        <taxon>Bacteria</taxon>
        <taxon>Bacillati</taxon>
        <taxon>Bacillota</taxon>
        <taxon>Bacilli</taxon>
        <taxon>Bacillales</taxon>
        <taxon>Bacillaceae</taxon>
        <taxon>Bacillus</taxon>
        <taxon>Bacillus amyloliquefaciens group</taxon>
    </lineage>
</organism>
<name>UXAC_BACVZ</name>
<sequence>MKAFMGDDFLLNSKTAVKLYREYAENMPIIDYHCHLSPKEIYENKTFATITEAWLYGDHYKWRIMRANGIEERCITGNASDEEKFFAWAKTVPMAIGNPLYSWTHLELQRWFGIYDVLNEKTAAAIWKKTNELLQGDGFGARDLILKSNVKVICTTDDPADALTYHELLKESDFPVQVLPGFRPDKGLDISSPGFADWVRSLESASGMAVSSYQSYLDALESRVRFFHNAGGRVSDHALDQMVYAETTEEEAARIFAAGLSGEHVSFEDEKKFKTRTLQYLCGLYAELDWAMQFHINALRNTNTNKFSSLGPDTGYDSINDERIAKPLARLLDSAEKKRQLPKTILYSLNPNDNYIIASMINSFQDGKTPGKIQFGTAWWFNDTKDGMLQQMRALSNMGLFSRFIGMLTDSRSFLSYPRHEYFRRLVCTLIGGWAEQGEAPYDMELLGKIVEGICYRNAEEYFRF</sequence>